<organism>
    <name type="scientific">Mesorhizobium japonicum (strain LMG 29417 / CECT 9101 / MAFF 303099)</name>
    <name type="common">Mesorhizobium loti (strain MAFF 303099)</name>
    <dbReference type="NCBI Taxonomy" id="266835"/>
    <lineage>
        <taxon>Bacteria</taxon>
        <taxon>Pseudomonadati</taxon>
        <taxon>Pseudomonadota</taxon>
        <taxon>Alphaproteobacteria</taxon>
        <taxon>Hyphomicrobiales</taxon>
        <taxon>Phyllobacteriaceae</taxon>
        <taxon>Mesorhizobium</taxon>
    </lineage>
</organism>
<name>RSGA_RHILO</name>
<protein>
    <recommendedName>
        <fullName evidence="1">Small ribosomal subunit biogenesis GTPase RsgA</fullName>
        <ecNumber evidence="1">3.6.1.-</ecNumber>
    </recommendedName>
</protein>
<feature type="chain" id="PRO_0000171510" description="Small ribosomal subunit biogenesis GTPase RsgA">
    <location>
        <begin position="1"/>
        <end position="346"/>
    </location>
</feature>
<feature type="domain" description="CP-type G" evidence="2">
    <location>
        <begin position="98"/>
        <end position="261"/>
    </location>
</feature>
<feature type="region of interest" description="Disordered" evidence="3">
    <location>
        <begin position="317"/>
        <end position="346"/>
    </location>
</feature>
<feature type="binding site" evidence="1">
    <location>
        <begin position="148"/>
        <end position="151"/>
    </location>
    <ligand>
        <name>GTP</name>
        <dbReference type="ChEBI" id="CHEBI:37565"/>
    </ligand>
</feature>
<feature type="binding site" evidence="1">
    <location>
        <begin position="200"/>
        <end position="208"/>
    </location>
    <ligand>
        <name>GTP</name>
        <dbReference type="ChEBI" id="CHEBI:37565"/>
    </ligand>
</feature>
<feature type="binding site" evidence="1">
    <location>
        <position position="284"/>
    </location>
    <ligand>
        <name>Zn(2+)</name>
        <dbReference type="ChEBI" id="CHEBI:29105"/>
    </ligand>
</feature>
<feature type="binding site" evidence="1">
    <location>
        <position position="289"/>
    </location>
    <ligand>
        <name>Zn(2+)</name>
        <dbReference type="ChEBI" id="CHEBI:29105"/>
    </ligand>
</feature>
<feature type="binding site" evidence="1">
    <location>
        <position position="291"/>
    </location>
    <ligand>
        <name>Zn(2+)</name>
        <dbReference type="ChEBI" id="CHEBI:29105"/>
    </ligand>
</feature>
<feature type="binding site" evidence="1">
    <location>
        <position position="297"/>
    </location>
    <ligand>
        <name>Zn(2+)</name>
        <dbReference type="ChEBI" id="CHEBI:29105"/>
    </ligand>
</feature>
<keyword id="KW-0963">Cytoplasm</keyword>
<keyword id="KW-0342">GTP-binding</keyword>
<keyword id="KW-0378">Hydrolase</keyword>
<keyword id="KW-0479">Metal-binding</keyword>
<keyword id="KW-0547">Nucleotide-binding</keyword>
<keyword id="KW-0690">Ribosome biogenesis</keyword>
<keyword id="KW-0694">RNA-binding</keyword>
<keyword id="KW-0699">rRNA-binding</keyword>
<keyword id="KW-0862">Zinc</keyword>
<reference key="1">
    <citation type="journal article" date="2000" name="DNA Res.">
        <title>Complete genome structure of the nitrogen-fixing symbiotic bacterium Mesorhizobium loti.</title>
        <authorList>
            <person name="Kaneko T."/>
            <person name="Nakamura Y."/>
            <person name="Sato S."/>
            <person name="Asamizu E."/>
            <person name="Kato T."/>
            <person name="Sasamoto S."/>
            <person name="Watanabe A."/>
            <person name="Idesawa K."/>
            <person name="Ishikawa A."/>
            <person name="Kawashima K."/>
            <person name="Kimura T."/>
            <person name="Kishida Y."/>
            <person name="Kiyokawa C."/>
            <person name="Kohara M."/>
            <person name="Matsumoto M."/>
            <person name="Matsuno A."/>
            <person name="Mochizuki Y."/>
            <person name="Nakayama S."/>
            <person name="Nakazaki N."/>
            <person name="Shimpo S."/>
            <person name="Sugimoto M."/>
            <person name="Takeuchi C."/>
            <person name="Yamada M."/>
            <person name="Tabata S."/>
        </authorList>
    </citation>
    <scope>NUCLEOTIDE SEQUENCE [LARGE SCALE GENOMIC DNA]</scope>
    <source>
        <strain>LMG 29417 / CECT 9101 / MAFF 303099</strain>
    </source>
</reference>
<proteinExistence type="inferred from homology"/>
<accession>Q98JM4</accession>
<comment type="function">
    <text evidence="1">One of several proteins that assist in the late maturation steps of the functional core of the 30S ribosomal subunit. Helps release RbfA from mature subunits. May play a role in the assembly of ribosomal proteins into the subunit. Circularly permuted GTPase that catalyzes slow GTP hydrolysis, GTPase activity is stimulated by the 30S ribosomal subunit.</text>
</comment>
<comment type="cofactor">
    <cofactor evidence="1">
        <name>Zn(2+)</name>
        <dbReference type="ChEBI" id="CHEBI:29105"/>
    </cofactor>
    <text evidence="1">Binds 1 zinc ion per subunit.</text>
</comment>
<comment type="subunit">
    <text evidence="1">Monomer. Associates with 30S ribosomal subunit, binds 16S rRNA.</text>
</comment>
<comment type="subcellular location">
    <subcellularLocation>
        <location evidence="1">Cytoplasm</location>
    </subcellularLocation>
</comment>
<comment type="similarity">
    <text evidence="1">Belongs to the TRAFAC class YlqF/YawG GTPase family. RsgA subfamily.</text>
</comment>
<dbReference type="EC" id="3.6.1.-" evidence="1"/>
<dbReference type="EMBL" id="BA000012">
    <property type="protein sequence ID" value="BAB49141.1"/>
    <property type="molecule type" value="Genomic_DNA"/>
</dbReference>
<dbReference type="RefSeq" id="WP_010910493.1">
    <property type="nucleotide sequence ID" value="NC_002678.2"/>
</dbReference>
<dbReference type="SMR" id="Q98JM4"/>
<dbReference type="KEGG" id="mlo:mlr1879"/>
<dbReference type="PATRIC" id="fig|266835.9.peg.1508"/>
<dbReference type="eggNOG" id="COG1162">
    <property type="taxonomic scope" value="Bacteria"/>
</dbReference>
<dbReference type="HOGENOM" id="CLU_033617_0_1_5"/>
<dbReference type="Proteomes" id="UP000000552">
    <property type="component" value="Chromosome"/>
</dbReference>
<dbReference type="GO" id="GO:0005737">
    <property type="term" value="C:cytoplasm"/>
    <property type="evidence" value="ECO:0007669"/>
    <property type="project" value="UniProtKB-SubCell"/>
</dbReference>
<dbReference type="GO" id="GO:0005525">
    <property type="term" value="F:GTP binding"/>
    <property type="evidence" value="ECO:0007669"/>
    <property type="project" value="UniProtKB-UniRule"/>
</dbReference>
<dbReference type="GO" id="GO:0003924">
    <property type="term" value="F:GTPase activity"/>
    <property type="evidence" value="ECO:0007669"/>
    <property type="project" value="UniProtKB-UniRule"/>
</dbReference>
<dbReference type="GO" id="GO:0046872">
    <property type="term" value="F:metal ion binding"/>
    <property type="evidence" value="ECO:0007669"/>
    <property type="project" value="UniProtKB-KW"/>
</dbReference>
<dbReference type="GO" id="GO:0019843">
    <property type="term" value="F:rRNA binding"/>
    <property type="evidence" value="ECO:0007669"/>
    <property type="project" value="UniProtKB-KW"/>
</dbReference>
<dbReference type="GO" id="GO:0042274">
    <property type="term" value="P:ribosomal small subunit biogenesis"/>
    <property type="evidence" value="ECO:0007669"/>
    <property type="project" value="UniProtKB-UniRule"/>
</dbReference>
<dbReference type="CDD" id="cd01854">
    <property type="entry name" value="YjeQ_EngC"/>
    <property type="match status" value="1"/>
</dbReference>
<dbReference type="Gene3D" id="3.40.50.300">
    <property type="entry name" value="P-loop containing nucleotide triphosphate hydrolases"/>
    <property type="match status" value="1"/>
</dbReference>
<dbReference type="Gene3D" id="1.10.40.50">
    <property type="entry name" value="Probable gtpase engc, domain 3"/>
    <property type="match status" value="1"/>
</dbReference>
<dbReference type="HAMAP" id="MF_01820">
    <property type="entry name" value="GTPase_RsgA"/>
    <property type="match status" value="1"/>
</dbReference>
<dbReference type="InterPro" id="IPR030378">
    <property type="entry name" value="G_CP_dom"/>
</dbReference>
<dbReference type="InterPro" id="IPR027417">
    <property type="entry name" value="P-loop_NTPase"/>
</dbReference>
<dbReference type="InterPro" id="IPR004881">
    <property type="entry name" value="Ribosome_biogen_GTPase_RsgA"/>
</dbReference>
<dbReference type="InterPro" id="IPR010914">
    <property type="entry name" value="RsgA_GTPase_dom"/>
</dbReference>
<dbReference type="NCBIfam" id="TIGR00157">
    <property type="entry name" value="ribosome small subunit-dependent GTPase A"/>
    <property type="match status" value="1"/>
</dbReference>
<dbReference type="PANTHER" id="PTHR32120">
    <property type="entry name" value="SMALL RIBOSOMAL SUBUNIT BIOGENESIS GTPASE RSGA"/>
    <property type="match status" value="1"/>
</dbReference>
<dbReference type="PANTHER" id="PTHR32120:SF10">
    <property type="entry name" value="SMALL RIBOSOMAL SUBUNIT BIOGENESIS GTPASE RSGA"/>
    <property type="match status" value="1"/>
</dbReference>
<dbReference type="Pfam" id="PF03193">
    <property type="entry name" value="RsgA_GTPase"/>
    <property type="match status" value="1"/>
</dbReference>
<dbReference type="SUPFAM" id="SSF52540">
    <property type="entry name" value="P-loop containing nucleoside triphosphate hydrolases"/>
    <property type="match status" value="1"/>
</dbReference>
<dbReference type="PROSITE" id="PS50936">
    <property type="entry name" value="ENGC_GTPASE"/>
    <property type="match status" value="1"/>
</dbReference>
<dbReference type="PROSITE" id="PS51721">
    <property type="entry name" value="G_CP"/>
    <property type="match status" value="1"/>
</dbReference>
<sequence length="346" mass="36745">MPLVEAVTASSPSLADLGWSEFFGDQLEASDANLIPTRIAMVHRDRLSGLSQTGQTDLSLAPQATTGDYAVGDWVLVEPHSHLVQRRLTRKTVLERRVQGGRGPQLAAANVDTLFIVTSCNADFNIARLERYLALANEAGTTPVILLTKADTAEDAEAYRKQAAALQRELAVVTLNPRIPGAASALAAWCGAGQTVALIGSSGVGKSTLVNTLAGSAQQSPQQTGAIREHDAKGRHTTTARSLHAIAGGGWVIDTPGMRTLQVSDVGYGIDTLFAEITELAPLCKFRDCTHVHEPGCAVQAALKAGTLDPERLARWRKLSDENQHNTPVQSGPRGAKSPAGRGKRR</sequence>
<evidence type="ECO:0000255" key="1">
    <source>
        <dbReference type="HAMAP-Rule" id="MF_01820"/>
    </source>
</evidence>
<evidence type="ECO:0000255" key="2">
    <source>
        <dbReference type="PROSITE-ProRule" id="PRU01058"/>
    </source>
</evidence>
<evidence type="ECO:0000256" key="3">
    <source>
        <dbReference type="SAM" id="MobiDB-lite"/>
    </source>
</evidence>
<gene>
    <name evidence="1" type="primary">rsgA</name>
    <name type="ordered locus">mlr1879</name>
</gene>